<comment type="function">
    <text evidence="1">This protein is involved in the repair of mismatches in DNA. It is possible that it carries out the mismatch recognition step. This protein has a weak ATPase activity.</text>
</comment>
<comment type="similarity">
    <text evidence="1">Belongs to the DNA mismatch repair MutS family.</text>
</comment>
<reference key="1">
    <citation type="journal article" date="2007" name="Nat. Biotechnol.">
        <title>Complete genome sequence of the myxobacterium Sorangium cellulosum.</title>
        <authorList>
            <person name="Schneiker S."/>
            <person name="Perlova O."/>
            <person name="Kaiser O."/>
            <person name="Gerth K."/>
            <person name="Alici A."/>
            <person name="Altmeyer M.O."/>
            <person name="Bartels D."/>
            <person name="Bekel T."/>
            <person name="Beyer S."/>
            <person name="Bode E."/>
            <person name="Bode H.B."/>
            <person name="Bolten C.J."/>
            <person name="Choudhuri J.V."/>
            <person name="Doss S."/>
            <person name="Elnakady Y.A."/>
            <person name="Frank B."/>
            <person name="Gaigalat L."/>
            <person name="Goesmann A."/>
            <person name="Groeger C."/>
            <person name="Gross F."/>
            <person name="Jelsbak L."/>
            <person name="Jelsbak L."/>
            <person name="Kalinowski J."/>
            <person name="Kegler C."/>
            <person name="Knauber T."/>
            <person name="Konietzny S."/>
            <person name="Kopp M."/>
            <person name="Krause L."/>
            <person name="Krug D."/>
            <person name="Linke B."/>
            <person name="Mahmud T."/>
            <person name="Martinez-Arias R."/>
            <person name="McHardy A.C."/>
            <person name="Merai M."/>
            <person name="Meyer F."/>
            <person name="Mormann S."/>
            <person name="Munoz-Dorado J."/>
            <person name="Perez J."/>
            <person name="Pradella S."/>
            <person name="Rachid S."/>
            <person name="Raddatz G."/>
            <person name="Rosenau F."/>
            <person name="Rueckert C."/>
            <person name="Sasse F."/>
            <person name="Scharfe M."/>
            <person name="Schuster S.C."/>
            <person name="Suen G."/>
            <person name="Treuner-Lange A."/>
            <person name="Velicer G.J."/>
            <person name="Vorholter F.-J."/>
            <person name="Weissman K.J."/>
            <person name="Welch R.D."/>
            <person name="Wenzel S.C."/>
            <person name="Whitworth D.E."/>
            <person name="Wilhelm S."/>
            <person name="Wittmann C."/>
            <person name="Bloecker H."/>
            <person name="Puehler A."/>
            <person name="Mueller R."/>
        </authorList>
    </citation>
    <scope>NUCLEOTIDE SEQUENCE [LARGE SCALE GENOMIC DNA]</scope>
    <source>
        <strain>So ce56</strain>
    </source>
</reference>
<proteinExistence type="inferred from homology"/>
<sequence>MQPSEQPAARKKLTPVMRQYEDAKALHPDAILFFRMGDFYEMFNDDAVLVSRALNLTLTSRNKGEPDESPMAGVPHHAAHGYIARLLALGHKVAICEQCGDPSKIKGLVPRQVVRVVTPGLVTETEQLDARANHYLAAVDGGGAPRGDALGAGGPYGLSLLDLSTGELSATSVPDAATLLAELARADPREALIARDLPDVRAAAASLACRAALRDDEELDSAHVASILDDAAIEPISAAALAEHPLPAVRAAARALRFARRCSPGARIPVRRIAPHDTSGTLRIDETAQAHLELVRAADGGRRGTLLDVIDCTVTPGGARLLRRRLLSPLADLAGIRRRLDEVELFVSHPRARGELRQALGGVGDLERLSVRALLGEATPRDLGLLRDGLTAAPAAIAAVRSIPDLGKAAARSDDGAAARGKDGAAAGSSSGSEPLLAEAAALDVVADVCAELTAALIERPPPNTREGGIFREGYDKELDDARGVEKNATELILALEAKLRTQTGAPSLRVKYTRVFGWYIEVTRAHIAKVPETFRRKQTVATGERYTSDELDELADKIEHAGARALERETALFDRLRALVAKSEGRLRALARKLAAWDVAAALADVAHRNDYVRPHVTAGEALAIRDGRHPVVERYAAAGHFVPNDTRLDLSGERLWLITGPNMAGKSTLMRQVALIVVLAQMGSYVPAREAEIGLVDRILSRVGASDNVARGESTFMVEMRETAEILRDATRRSLVILDEIGRGTSTYDGLAIAWAVAEHLFDAIGCRALFATHYHELTELSARAPGIANYSVAAREHGDDVIFLHKLEAGPASRSYGVAVARLAGVPEGVLARARAILATLESGAALPGGKHASLRGRTRGGAAQLDLFAPAQAAVPPEQSAVIETLRAVDVDRLAPLDALRLVAKLKGLLGGGG</sequence>
<dbReference type="EMBL" id="AM746676">
    <property type="protein sequence ID" value="CAN93288.1"/>
    <property type="molecule type" value="Genomic_DNA"/>
</dbReference>
<dbReference type="RefSeq" id="WP_012235760.1">
    <property type="nucleotide sequence ID" value="NC_010162.1"/>
</dbReference>
<dbReference type="SMR" id="A9GIM9"/>
<dbReference type="STRING" id="448385.sce3129"/>
<dbReference type="KEGG" id="scl:sce3129"/>
<dbReference type="eggNOG" id="COG0249">
    <property type="taxonomic scope" value="Bacteria"/>
</dbReference>
<dbReference type="HOGENOM" id="CLU_002472_4_0_7"/>
<dbReference type="OrthoDB" id="9802448at2"/>
<dbReference type="BioCyc" id="SCEL448385:SCE_RS16035-MONOMER"/>
<dbReference type="Proteomes" id="UP000002139">
    <property type="component" value="Chromosome"/>
</dbReference>
<dbReference type="GO" id="GO:0005829">
    <property type="term" value="C:cytosol"/>
    <property type="evidence" value="ECO:0007669"/>
    <property type="project" value="TreeGrafter"/>
</dbReference>
<dbReference type="GO" id="GO:0005524">
    <property type="term" value="F:ATP binding"/>
    <property type="evidence" value="ECO:0007669"/>
    <property type="project" value="UniProtKB-UniRule"/>
</dbReference>
<dbReference type="GO" id="GO:0140664">
    <property type="term" value="F:ATP-dependent DNA damage sensor activity"/>
    <property type="evidence" value="ECO:0007669"/>
    <property type="project" value="InterPro"/>
</dbReference>
<dbReference type="GO" id="GO:0003684">
    <property type="term" value="F:damaged DNA binding"/>
    <property type="evidence" value="ECO:0007669"/>
    <property type="project" value="UniProtKB-UniRule"/>
</dbReference>
<dbReference type="GO" id="GO:0030983">
    <property type="term" value="F:mismatched DNA binding"/>
    <property type="evidence" value="ECO:0007669"/>
    <property type="project" value="InterPro"/>
</dbReference>
<dbReference type="GO" id="GO:0006298">
    <property type="term" value="P:mismatch repair"/>
    <property type="evidence" value="ECO:0007669"/>
    <property type="project" value="UniProtKB-UniRule"/>
</dbReference>
<dbReference type="CDD" id="cd03284">
    <property type="entry name" value="ABC_MutS1"/>
    <property type="match status" value="1"/>
</dbReference>
<dbReference type="FunFam" id="3.40.1170.10:FF:000001">
    <property type="entry name" value="DNA mismatch repair protein MutS"/>
    <property type="match status" value="1"/>
</dbReference>
<dbReference type="FunFam" id="3.40.50.300:FF:000870">
    <property type="entry name" value="MutS protein homolog 4"/>
    <property type="match status" value="1"/>
</dbReference>
<dbReference type="Gene3D" id="1.10.1420.10">
    <property type="match status" value="2"/>
</dbReference>
<dbReference type="Gene3D" id="3.40.1170.10">
    <property type="entry name" value="DNA repair protein MutS, domain I"/>
    <property type="match status" value="1"/>
</dbReference>
<dbReference type="Gene3D" id="3.30.420.110">
    <property type="entry name" value="MutS, connector domain"/>
    <property type="match status" value="1"/>
</dbReference>
<dbReference type="Gene3D" id="3.40.50.300">
    <property type="entry name" value="P-loop containing nucleotide triphosphate hydrolases"/>
    <property type="match status" value="1"/>
</dbReference>
<dbReference type="HAMAP" id="MF_00096">
    <property type="entry name" value="MutS"/>
    <property type="match status" value="1"/>
</dbReference>
<dbReference type="InterPro" id="IPR005748">
    <property type="entry name" value="DNA_mismatch_repair_MutS"/>
</dbReference>
<dbReference type="InterPro" id="IPR007695">
    <property type="entry name" value="DNA_mismatch_repair_MutS-lik_N"/>
</dbReference>
<dbReference type="InterPro" id="IPR017261">
    <property type="entry name" value="DNA_mismatch_repair_MutS/MSH"/>
</dbReference>
<dbReference type="InterPro" id="IPR000432">
    <property type="entry name" value="DNA_mismatch_repair_MutS_C"/>
</dbReference>
<dbReference type="InterPro" id="IPR007861">
    <property type="entry name" value="DNA_mismatch_repair_MutS_clamp"/>
</dbReference>
<dbReference type="InterPro" id="IPR007696">
    <property type="entry name" value="DNA_mismatch_repair_MutS_core"/>
</dbReference>
<dbReference type="InterPro" id="IPR016151">
    <property type="entry name" value="DNA_mismatch_repair_MutS_N"/>
</dbReference>
<dbReference type="InterPro" id="IPR036187">
    <property type="entry name" value="DNA_mismatch_repair_MutS_sf"/>
</dbReference>
<dbReference type="InterPro" id="IPR007860">
    <property type="entry name" value="DNA_mmatch_repair_MutS_con_dom"/>
</dbReference>
<dbReference type="InterPro" id="IPR045076">
    <property type="entry name" value="MutS"/>
</dbReference>
<dbReference type="InterPro" id="IPR036678">
    <property type="entry name" value="MutS_con_dom_sf"/>
</dbReference>
<dbReference type="InterPro" id="IPR027417">
    <property type="entry name" value="P-loop_NTPase"/>
</dbReference>
<dbReference type="NCBIfam" id="NF003810">
    <property type="entry name" value="PRK05399.1"/>
    <property type="match status" value="1"/>
</dbReference>
<dbReference type="PANTHER" id="PTHR11361:SF34">
    <property type="entry name" value="DNA MISMATCH REPAIR PROTEIN MSH1, MITOCHONDRIAL"/>
    <property type="match status" value="1"/>
</dbReference>
<dbReference type="PANTHER" id="PTHR11361">
    <property type="entry name" value="DNA MISMATCH REPAIR PROTEIN MUTS FAMILY MEMBER"/>
    <property type="match status" value="1"/>
</dbReference>
<dbReference type="Pfam" id="PF01624">
    <property type="entry name" value="MutS_I"/>
    <property type="match status" value="1"/>
</dbReference>
<dbReference type="Pfam" id="PF05188">
    <property type="entry name" value="MutS_II"/>
    <property type="match status" value="1"/>
</dbReference>
<dbReference type="Pfam" id="PF05192">
    <property type="entry name" value="MutS_III"/>
    <property type="match status" value="1"/>
</dbReference>
<dbReference type="Pfam" id="PF05190">
    <property type="entry name" value="MutS_IV"/>
    <property type="match status" value="1"/>
</dbReference>
<dbReference type="Pfam" id="PF00488">
    <property type="entry name" value="MutS_V"/>
    <property type="match status" value="1"/>
</dbReference>
<dbReference type="PIRSF" id="PIRSF037677">
    <property type="entry name" value="DNA_mis_repair_Msh6"/>
    <property type="match status" value="1"/>
</dbReference>
<dbReference type="SMART" id="SM00534">
    <property type="entry name" value="MUTSac"/>
    <property type="match status" value="1"/>
</dbReference>
<dbReference type="SMART" id="SM00533">
    <property type="entry name" value="MUTSd"/>
    <property type="match status" value="1"/>
</dbReference>
<dbReference type="SUPFAM" id="SSF55271">
    <property type="entry name" value="DNA repair protein MutS, domain I"/>
    <property type="match status" value="1"/>
</dbReference>
<dbReference type="SUPFAM" id="SSF53150">
    <property type="entry name" value="DNA repair protein MutS, domain II"/>
    <property type="match status" value="1"/>
</dbReference>
<dbReference type="SUPFAM" id="SSF48334">
    <property type="entry name" value="DNA repair protein MutS, domain III"/>
    <property type="match status" value="1"/>
</dbReference>
<dbReference type="SUPFAM" id="SSF52540">
    <property type="entry name" value="P-loop containing nucleoside triphosphate hydrolases"/>
    <property type="match status" value="1"/>
</dbReference>
<dbReference type="PROSITE" id="PS00486">
    <property type="entry name" value="DNA_MISMATCH_REPAIR_2"/>
    <property type="match status" value="1"/>
</dbReference>
<gene>
    <name evidence="1" type="primary">mutS</name>
    <name type="ordered locus">sce3129</name>
</gene>
<keyword id="KW-0067">ATP-binding</keyword>
<keyword id="KW-0227">DNA damage</keyword>
<keyword id="KW-0234">DNA repair</keyword>
<keyword id="KW-0238">DNA-binding</keyword>
<keyword id="KW-0547">Nucleotide-binding</keyword>
<keyword id="KW-1185">Reference proteome</keyword>
<evidence type="ECO:0000255" key="1">
    <source>
        <dbReference type="HAMAP-Rule" id="MF_00096"/>
    </source>
</evidence>
<accession>A9GIM9</accession>
<organism>
    <name type="scientific">Sorangium cellulosum (strain So ce56)</name>
    <name type="common">Polyangium cellulosum (strain So ce56)</name>
    <dbReference type="NCBI Taxonomy" id="448385"/>
    <lineage>
        <taxon>Bacteria</taxon>
        <taxon>Pseudomonadati</taxon>
        <taxon>Myxococcota</taxon>
        <taxon>Polyangia</taxon>
        <taxon>Polyangiales</taxon>
        <taxon>Polyangiaceae</taxon>
        <taxon>Sorangium</taxon>
    </lineage>
</organism>
<protein>
    <recommendedName>
        <fullName evidence="1">DNA mismatch repair protein MutS</fullName>
    </recommendedName>
</protein>
<feature type="chain" id="PRO_0000335227" description="DNA mismatch repair protein MutS">
    <location>
        <begin position="1"/>
        <end position="918"/>
    </location>
</feature>
<feature type="binding site" evidence="1">
    <location>
        <begin position="662"/>
        <end position="669"/>
    </location>
    <ligand>
        <name>ATP</name>
        <dbReference type="ChEBI" id="CHEBI:30616"/>
    </ligand>
</feature>
<name>MUTS_SORC5</name>